<proteinExistence type="inferred from homology"/>
<feature type="chain" id="PRO_1000076333" description="tRNA uridine 5-carboxymethylaminomethyl modification enzyme MnmG">
    <location>
        <begin position="1"/>
        <end position="632"/>
    </location>
</feature>
<feature type="binding site" evidence="1">
    <location>
        <begin position="13"/>
        <end position="18"/>
    </location>
    <ligand>
        <name>FAD</name>
        <dbReference type="ChEBI" id="CHEBI:57692"/>
    </ligand>
</feature>
<feature type="binding site" evidence="1">
    <location>
        <position position="125"/>
    </location>
    <ligand>
        <name>FAD</name>
        <dbReference type="ChEBI" id="CHEBI:57692"/>
    </ligand>
</feature>
<feature type="binding site" evidence="1">
    <location>
        <position position="180"/>
    </location>
    <ligand>
        <name>FAD</name>
        <dbReference type="ChEBI" id="CHEBI:57692"/>
    </ligand>
</feature>
<feature type="binding site" evidence="1">
    <location>
        <begin position="273"/>
        <end position="287"/>
    </location>
    <ligand>
        <name>NAD(+)</name>
        <dbReference type="ChEBI" id="CHEBI:57540"/>
    </ligand>
</feature>
<feature type="binding site" evidence="1">
    <location>
        <position position="370"/>
    </location>
    <ligand>
        <name>FAD</name>
        <dbReference type="ChEBI" id="CHEBI:57692"/>
    </ligand>
</feature>
<dbReference type="EMBL" id="CP000821">
    <property type="protein sequence ID" value="ABV39099.1"/>
    <property type="molecule type" value="Genomic_DNA"/>
</dbReference>
<dbReference type="RefSeq" id="WP_012144825.1">
    <property type="nucleotide sequence ID" value="NC_009831.1"/>
</dbReference>
<dbReference type="SMR" id="A8G1X6"/>
<dbReference type="STRING" id="425104.Ssed_4497"/>
<dbReference type="KEGG" id="sse:Ssed_4497"/>
<dbReference type="eggNOG" id="COG0445">
    <property type="taxonomic scope" value="Bacteria"/>
</dbReference>
<dbReference type="HOGENOM" id="CLU_007831_2_2_6"/>
<dbReference type="OrthoDB" id="9815560at2"/>
<dbReference type="Proteomes" id="UP000002015">
    <property type="component" value="Chromosome"/>
</dbReference>
<dbReference type="GO" id="GO:0005829">
    <property type="term" value="C:cytosol"/>
    <property type="evidence" value="ECO:0007669"/>
    <property type="project" value="TreeGrafter"/>
</dbReference>
<dbReference type="GO" id="GO:0050660">
    <property type="term" value="F:flavin adenine dinucleotide binding"/>
    <property type="evidence" value="ECO:0007669"/>
    <property type="project" value="UniProtKB-UniRule"/>
</dbReference>
<dbReference type="GO" id="GO:0030488">
    <property type="term" value="P:tRNA methylation"/>
    <property type="evidence" value="ECO:0007669"/>
    <property type="project" value="TreeGrafter"/>
</dbReference>
<dbReference type="GO" id="GO:0002098">
    <property type="term" value="P:tRNA wobble uridine modification"/>
    <property type="evidence" value="ECO:0007669"/>
    <property type="project" value="InterPro"/>
</dbReference>
<dbReference type="FunFam" id="1.10.10.1800:FF:000001">
    <property type="entry name" value="tRNA uridine 5-carboxymethylaminomethyl modification enzyme MnmG"/>
    <property type="match status" value="1"/>
</dbReference>
<dbReference type="FunFam" id="1.10.150.570:FF:000001">
    <property type="entry name" value="tRNA uridine 5-carboxymethylaminomethyl modification enzyme MnmG"/>
    <property type="match status" value="1"/>
</dbReference>
<dbReference type="FunFam" id="3.50.50.60:FF:000002">
    <property type="entry name" value="tRNA uridine 5-carboxymethylaminomethyl modification enzyme MnmG"/>
    <property type="match status" value="1"/>
</dbReference>
<dbReference type="FunFam" id="3.50.50.60:FF:000010">
    <property type="entry name" value="tRNA uridine 5-carboxymethylaminomethyl modification enzyme MnmG"/>
    <property type="match status" value="1"/>
</dbReference>
<dbReference type="Gene3D" id="3.50.50.60">
    <property type="entry name" value="FAD/NAD(P)-binding domain"/>
    <property type="match status" value="2"/>
</dbReference>
<dbReference type="Gene3D" id="1.10.150.570">
    <property type="entry name" value="GidA associated domain, C-terminal subdomain"/>
    <property type="match status" value="1"/>
</dbReference>
<dbReference type="Gene3D" id="1.10.10.1800">
    <property type="entry name" value="tRNA uridine 5-carboxymethylaminomethyl modification enzyme MnmG/GidA"/>
    <property type="match status" value="1"/>
</dbReference>
<dbReference type="HAMAP" id="MF_00129">
    <property type="entry name" value="MnmG_GidA"/>
    <property type="match status" value="1"/>
</dbReference>
<dbReference type="InterPro" id="IPR036188">
    <property type="entry name" value="FAD/NAD-bd_sf"/>
</dbReference>
<dbReference type="InterPro" id="IPR049312">
    <property type="entry name" value="GIDA_C_N"/>
</dbReference>
<dbReference type="InterPro" id="IPR004416">
    <property type="entry name" value="MnmG"/>
</dbReference>
<dbReference type="InterPro" id="IPR002218">
    <property type="entry name" value="MnmG-rel"/>
</dbReference>
<dbReference type="InterPro" id="IPR020595">
    <property type="entry name" value="MnmG-rel_CS"/>
</dbReference>
<dbReference type="InterPro" id="IPR026904">
    <property type="entry name" value="MnmG_C"/>
</dbReference>
<dbReference type="InterPro" id="IPR047001">
    <property type="entry name" value="MnmG_C_subdom"/>
</dbReference>
<dbReference type="InterPro" id="IPR044920">
    <property type="entry name" value="MnmG_C_subdom_sf"/>
</dbReference>
<dbReference type="InterPro" id="IPR040131">
    <property type="entry name" value="MnmG_N"/>
</dbReference>
<dbReference type="NCBIfam" id="TIGR00136">
    <property type="entry name" value="mnmG_gidA"/>
    <property type="match status" value="1"/>
</dbReference>
<dbReference type="PANTHER" id="PTHR11806">
    <property type="entry name" value="GLUCOSE INHIBITED DIVISION PROTEIN A"/>
    <property type="match status" value="1"/>
</dbReference>
<dbReference type="PANTHER" id="PTHR11806:SF0">
    <property type="entry name" value="PROTEIN MTO1 HOMOLOG, MITOCHONDRIAL"/>
    <property type="match status" value="1"/>
</dbReference>
<dbReference type="Pfam" id="PF01134">
    <property type="entry name" value="GIDA"/>
    <property type="match status" value="1"/>
</dbReference>
<dbReference type="Pfam" id="PF21680">
    <property type="entry name" value="GIDA_C_1st"/>
    <property type="match status" value="1"/>
</dbReference>
<dbReference type="Pfam" id="PF13932">
    <property type="entry name" value="SAM_GIDA_C"/>
    <property type="match status" value="1"/>
</dbReference>
<dbReference type="PRINTS" id="PR00368">
    <property type="entry name" value="FADPNR"/>
</dbReference>
<dbReference type="SMART" id="SM01228">
    <property type="entry name" value="GIDA_assoc_3"/>
    <property type="match status" value="1"/>
</dbReference>
<dbReference type="SUPFAM" id="SSF51905">
    <property type="entry name" value="FAD/NAD(P)-binding domain"/>
    <property type="match status" value="1"/>
</dbReference>
<dbReference type="PROSITE" id="PS01280">
    <property type="entry name" value="GIDA_1"/>
    <property type="match status" value="1"/>
</dbReference>
<dbReference type="PROSITE" id="PS01281">
    <property type="entry name" value="GIDA_2"/>
    <property type="match status" value="1"/>
</dbReference>
<name>MNMG_SHESH</name>
<accession>A8G1X6</accession>
<reference key="1">
    <citation type="submission" date="2007-08" db="EMBL/GenBank/DDBJ databases">
        <title>Complete sequence of Shewanella sediminis HAW-EB3.</title>
        <authorList>
            <consortium name="US DOE Joint Genome Institute"/>
            <person name="Copeland A."/>
            <person name="Lucas S."/>
            <person name="Lapidus A."/>
            <person name="Barry K."/>
            <person name="Glavina del Rio T."/>
            <person name="Dalin E."/>
            <person name="Tice H."/>
            <person name="Pitluck S."/>
            <person name="Chertkov O."/>
            <person name="Brettin T."/>
            <person name="Bruce D."/>
            <person name="Detter J.C."/>
            <person name="Han C."/>
            <person name="Schmutz J."/>
            <person name="Larimer F."/>
            <person name="Land M."/>
            <person name="Hauser L."/>
            <person name="Kyrpides N."/>
            <person name="Kim E."/>
            <person name="Zhao J.-S."/>
            <person name="Richardson P."/>
        </authorList>
    </citation>
    <scope>NUCLEOTIDE SEQUENCE [LARGE SCALE GENOMIC DNA]</scope>
    <source>
        <strain>HAW-EB3</strain>
    </source>
</reference>
<evidence type="ECO:0000255" key="1">
    <source>
        <dbReference type="HAMAP-Rule" id="MF_00129"/>
    </source>
</evidence>
<sequence length="632" mass="69933">MHFHERFDVIVIGGGHAGTEAALAAARMGSKTLLLTHNIDTLGQMSCNPAIGGIGKGHLVKEIDALGGAMAIATDYAGIQFRTLNSSKGPAVRATRAQADRALYRAKIQEILQNQPNLRLFQQAVDDLIVENGKVTGVVTQMGLAFEAPAVVLTAGTFLSGKIHIGMQNYSGGRAGDPPSIALADRLRELPIRIGRLKTGTPPRIDANTINFDLMTEQKGDTPLPVMSFIGDVSHHPRQVSCFVTHTNERTHDIIRGGLDRSPMYSGIIEGVGPRYCPSIEDKINRFADKSSHQIFIEPEGLNTNEIYPNGISTSLPFDVQLNLVRSIKGMENAEIIRPGYAIEYDYFDPRDLKNSLETKSIQGLFFAGQINGTTGYEEAGAQGLLAGMNASLQVQGKESWCPRRDEAYLGVLVDDLSTLGTKEPYRMFTSRAEYRLLLREDNADLRLTEKGHQIGLVDEDRWAKFNKKRESIELELQRLRSQWVHPNSPLLEVLNPELNTPISREASFEDLLRRPEMDYPKLMSLEGFGPALEDQRAAEQVQIQVKYSGYIQRQQDEIDKAIKHETTGLPLELDYQEVPGLSNEVIAKLNDHKPETIGQASRISGMTPAAISILLVHLKRRGLLRKNPSKS</sequence>
<organism>
    <name type="scientific">Shewanella sediminis (strain HAW-EB3)</name>
    <dbReference type="NCBI Taxonomy" id="425104"/>
    <lineage>
        <taxon>Bacteria</taxon>
        <taxon>Pseudomonadati</taxon>
        <taxon>Pseudomonadota</taxon>
        <taxon>Gammaproteobacteria</taxon>
        <taxon>Alteromonadales</taxon>
        <taxon>Shewanellaceae</taxon>
        <taxon>Shewanella</taxon>
    </lineage>
</organism>
<protein>
    <recommendedName>
        <fullName evidence="1">tRNA uridine 5-carboxymethylaminomethyl modification enzyme MnmG</fullName>
    </recommendedName>
    <alternativeName>
        <fullName evidence="1">Glucose-inhibited division protein A</fullName>
    </alternativeName>
</protein>
<gene>
    <name evidence="1" type="primary">mnmG</name>
    <name evidence="1" type="synonym">gidA</name>
    <name type="ordered locus">Ssed_4497</name>
</gene>
<comment type="function">
    <text evidence="1">NAD-binding protein involved in the addition of a carboxymethylaminomethyl (cmnm) group at the wobble position (U34) of certain tRNAs, forming tRNA-cmnm(5)s(2)U34.</text>
</comment>
<comment type="cofactor">
    <cofactor evidence="1">
        <name>FAD</name>
        <dbReference type="ChEBI" id="CHEBI:57692"/>
    </cofactor>
</comment>
<comment type="subunit">
    <text evidence="1">Homodimer. Heterotetramer of two MnmE and two MnmG subunits.</text>
</comment>
<comment type="subcellular location">
    <subcellularLocation>
        <location evidence="1">Cytoplasm</location>
    </subcellularLocation>
</comment>
<comment type="similarity">
    <text evidence="1">Belongs to the MnmG family.</text>
</comment>
<keyword id="KW-0963">Cytoplasm</keyword>
<keyword id="KW-0274">FAD</keyword>
<keyword id="KW-0285">Flavoprotein</keyword>
<keyword id="KW-0520">NAD</keyword>
<keyword id="KW-1185">Reference proteome</keyword>
<keyword id="KW-0819">tRNA processing</keyword>